<sequence>MTIKVAINGYGRIGRNVLRAHYEGGKRHDIEIVAINDLGNAATNAHLTQYDTVHGRFPGEVSVDGDAFRVNGDRIRVLAQRNPAELPWGELGVDVVMECTGLFTSKEKASAHLRGGAKKVIISAPGGKDVDATIVYGVNHGVLKATDTVISNASCTTNCLAPLVKPLHEKLGLVNGLMTTVHSYTNDQVLTDVYHEDLRRARSATMSMIPTKTGAAAAVGLVMPELDGRLDGFAVRVPTINVSLVDLSFVAARPTTVEEVNGILKAAAEGELKGILDYNTAPLVSVDFNHNPASSTFDATLTKVNGTLVKVSAWYDNEWGFSNRMLDTAVALAHAR</sequence>
<comment type="function">
    <text evidence="2">Could be involved in carbon fixation as a component of the Calvin cycle. Catalyzes the oxidative phosphorylation of glyceraldehyde 3-phosphate (G3P) to 1,3-bisphosphoglycerate (BPG) using the cofactor NAD. The first reaction step involves the formation of a hemiacetal intermediate between G3P and a cysteine residue, and this hemiacetal intermediate is then oxidized to a thioester, with concomitant reduction of NAD to NADH. The reduced NADH is then exchanged with the second NAD, and the thioester is attacked by a nucleophilic inorganic phosphate to produce BPG.</text>
</comment>
<comment type="catalytic activity">
    <reaction evidence="1">
        <text>D-glyceraldehyde 3-phosphate + phosphate + NAD(+) = (2R)-3-phospho-glyceroyl phosphate + NADH + H(+)</text>
        <dbReference type="Rhea" id="RHEA:10300"/>
        <dbReference type="ChEBI" id="CHEBI:15378"/>
        <dbReference type="ChEBI" id="CHEBI:43474"/>
        <dbReference type="ChEBI" id="CHEBI:57540"/>
        <dbReference type="ChEBI" id="CHEBI:57604"/>
        <dbReference type="ChEBI" id="CHEBI:57945"/>
        <dbReference type="ChEBI" id="CHEBI:59776"/>
        <dbReference type="EC" id="1.2.1.12"/>
    </reaction>
</comment>
<comment type="pathway">
    <text evidence="5">Carbohydrate biosynthesis; Calvin cycle.</text>
</comment>
<comment type="subunit">
    <text evidence="1">Homotetramer.</text>
</comment>
<comment type="similarity">
    <text evidence="4">Belongs to the glyceraldehyde-3-phosphate dehydrogenase family.</text>
</comment>
<feature type="chain" id="PRO_0000145621" description="Glyceraldehyde-3-phosphate dehydrogenase, chromosomal">
    <location>
        <begin position="1"/>
        <end position="336"/>
    </location>
</feature>
<feature type="active site" description="Nucleophile" evidence="1">
    <location>
        <position position="155"/>
    </location>
</feature>
<feature type="binding site" evidence="1">
    <location>
        <begin position="12"/>
        <end position="13"/>
    </location>
    <ligand>
        <name>NAD(+)</name>
        <dbReference type="ChEBI" id="CHEBI:57540"/>
    </ligand>
</feature>
<feature type="binding site" evidence="1">
    <location>
        <position position="37"/>
    </location>
    <ligand>
        <name>NAD(+)</name>
        <dbReference type="ChEBI" id="CHEBI:57540"/>
    </ligand>
</feature>
<feature type="binding site" evidence="1">
    <location>
        <position position="81"/>
    </location>
    <ligand>
        <name>NAD(+)</name>
        <dbReference type="ChEBI" id="CHEBI:57540"/>
    </ligand>
</feature>
<feature type="binding site" evidence="1">
    <location>
        <position position="123"/>
    </location>
    <ligand>
        <name>NAD(+)</name>
        <dbReference type="ChEBI" id="CHEBI:57540"/>
    </ligand>
</feature>
<feature type="binding site" evidence="1">
    <location>
        <begin position="154"/>
        <end position="156"/>
    </location>
    <ligand>
        <name>D-glyceraldehyde 3-phosphate</name>
        <dbReference type="ChEBI" id="CHEBI:59776"/>
    </ligand>
</feature>
<feature type="binding site" evidence="1">
    <location>
        <position position="185"/>
    </location>
    <ligand>
        <name>D-glyceraldehyde 3-phosphate</name>
        <dbReference type="ChEBI" id="CHEBI:59776"/>
    </ligand>
</feature>
<feature type="binding site" evidence="1">
    <location>
        <position position="186"/>
    </location>
    <ligand>
        <name>NAD(+)</name>
        <dbReference type="ChEBI" id="CHEBI:57540"/>
    </ligand>
</feature>
<feature type="binding site" evidence="1">
    <location>
        <position position="200"/>
    </location>
    <ligand>
        <name>D-glyceraldehyde 3-phosphate</name>
        <dbReference type="ChEBI" id="CHEBI:59776"/>
    </ligand>
</feature>
<feature type="binding site" evidence="1">
    <location>
        <begin position="213"/>
        <end position="214"/>
    </location>
    <ligand>
        <name>D-glyceraldehyde 3-phosphate</name>
        <dbReference type="ChEBI" id="CHEBI:59776"/>
    </ligand>
</feature>
<feature type="binding site" evidence="1">
    <location>
        <position position="236"/>
    </location>
    <ligand>
        <name>D-glyceraldehyde 3-phosphate</name>
        <dbReference type="ChEBI" id="CHEBI:59776"/>
    </ligand>
</feature>
<feature type="binding site" evidence="1">
    <location>
        <position position="317"/>
    </location>
    <ligand>
        <name>NAD(+)</name>
        <dbReference type="ChEBI" id="CHEBI:57540"/>
    </ligand>
</feature>
<feature type="site" description="Activates thiol group during catalysis" evidence="1">
    <location>
        <position position="182"/>
    </location>
</feature>
<proteinExistence type="inferred from homology"/>
<evidence type="ECO:0000250" key="1">
    <source>
        <dbReference type="UniProtKB" id="P0A9B2"/>
    </source>
</evidence>
<evidence type="ECO:0000269" key="2">
    <source>
    </source>
</evidence>
<evidence type="ECO:0000303" key="3">
    <source>
    </source>
</evidence>
<evidence type="ECO:0000305" key="4"/>
<evidence type="ECO:0000305" key="5">
    <source>
    </source>
</evidence>
<keyword id="KW-0113">Calvin cycle</keyword>
<keyword id="KW-0520">NAD</keyword>
<keyword id="KW-0547">Nucleotide-binding</keyword>
<keyword id="KW-0560">Oxidoreductase</keyword>
<keyword id="KW-1185">Reference proteome</keyword>
<reference key="1">
    <citation type="journal article" date="1995" name="Arch. Microbiol.">
        <title>Analysis of the genes forming the distal parts of the two cbb CO2 fixation operons from Alcaligenes eutrophus.</title>
        <authorList>
            <person name="Schaeferfohann J."/>
            <person name="Yoo J.-G."/>
            <person name="Bowien B."/>
        </authorList>
    </citation>
    <scope>NUCLEOTIDE SEQUENCE [GENOMIC DNA]</scope>
    <scope>FUNCTION</scope>
</reference>
<reference key="2">
    <citation type="journal article" date="2006" name="Nat. Biotechnol.">
        <title>Genome sequence of the bioplastic-producing 'Knallgas' bacterium Ralstonia eutropha H16.</title>
        <authorList>
            <person name="Pohlmann A."/>
            <person name="Fricke W.F."/>
            <person name="Reinecke F."/>
            <person name="Kusian B."/>
            <person name="Liesegang H."/>
            <person name="Cramm R."/>
            <person name="Eitinger T."/>
            <person name="Ewering C."/>
            <person name="Poetter M."/>
            <person name="Schwartz E."/>
            <person name="Strittmatter A."/>
            <person name="Voss I."/>
            <person name="Gottschalk G."/>
            <person name="Steinbuechel A."/>
            <person name="Friedrich B."/>
            <person name="Bowien B."/>
        </authorList>
    </citation>
    <scope>NUCLEOTIDE SEQUENCE [LARGE SCALE GENOMIC DNA]</scope>
    <source>
        <strain>ATCC 17699 / DSM 428 / KCTC 22496 / NCIMB 10442 / H16 / Stanier 337</strain>
    </source>
</reference>
<organism>
    <name type="scientific">Cupriavidus necator (strain ATCC 17699 / DSM 428 / KCTC 22496 / NCIMB 10442 / H16 / Stanier 337)</name>
    <name type="common">Ralstonia eutropha</name>
    <dbReference type="NCBI Taxonomy" id="381666"/>
    <lineage>
        <taxon>Bacteria</taxon>
        <taxon>Pseudomonadati</taxon>
        <taxon>Pseudomonadota</taxon>
        <taxon>Betaproteobacteria</taxon>
        <taxon>Burkholderiales</taxon>
        <taxon>Burkholderiaceae</taxon>
        <taxon>Cupriavidus</taxon>
    </lineage>
</organism>
<accession>P50321</accession>
<accession>Q0K1E9</accession>
<dbReference type="EC" id="1.2.1.12" evidence="1"/>
<dbReference type="EMBL" id="U12422">
    <property type="protein sequence ID" value="AAC43443.1"/>
    <property type="molecule type" value="Genomic_DNA"/>
</dbReference>
<dbReference type="EMBL" id="AM260480">
    <property type="protein sequence ID" value="CAJ96175.1"/>
    <property type="molecule type" value="Genomic_DNA"/>
</dbReference>
<dbReference type="PIR" id="I39550">
    <property type="entry name" value="I39550"/>
</dbReference>
<dbReference type="SMR" id="P50321"/>
<dbReference type="STRING" id="381666.H16_B1386"/>
<dbReference type="KEGG" id="reh:H16_B1386"/>
<dbReference type="eggNOG" id="COG0057">
    <property type="taxonomic scope" value="Bacteria"/>
</dbReference>
<dbReference type="HOGENOM" id="CLU_030140_0_2_4"/>
<dbReference type="OrthoDB" id="9803304at2"/>
<dbReference type="UniPathway" id="UPA00116"/>
<dbReference type="Proteomes" id="UP000008210">
    <property type="component" value="Chromosome 2"/>
</dbReference>
<dbReference type="GO" id="GO:0004365">
    <property type="term" value="F:glyceraldehyde-3-phosphate dehydrogenase (NAD+) (phosphorylating) activity"/>
    <property type="evidence" value="ECO:0000250"/>
    <property type="project" value="UniProtKB"/>
</dbReference>
<dbReference type="GO" id="GO:0051287">
    <property type="term" value="F:NAD binding"/>
    <property type="evidence" value="ECO:0000250"/>
    <property type="project" value="UniProtKB"/>
</dbReference>
<dbReference type="GO" id="GO:0050661">
    <property type="term" value="F:NADP binding"/>
    <property type="evidence" value="ECO:0007669"/>
    <property type="project" value="InterPro"/>
</dbReference>
<dbReference type="GO" id="GO:0006006">
    <property type="term" value="P:glucose metabolic process"/>
    <property type="evidence" value="ECO:0007669"/>
    <property type="project" value="InterPro"/>
</dbReference>
<dbReference type="GO" id="GO:0019253">
    <property type="term" value="P:reductive pentose-phosphate cycle"/>
    <property type="evidence" value="ECO:0007669"/>
    <property type="project" value="UniProtKB-UniPathway"/>
</dbReference>
<dbReference type="CDD" id="cd18126">
    <property type="entry name" value="GAPDH_I_C"/>
    <property type="match status" value="1"/>
</dbReference>
<dbReference type="CDD" id="cd05214">
    <property type="entry name" value="GAPDH_I_N"/>
    <property type="match status" value="1"/>
</dbReference>
<dbReference type="FunFam" id="3.30.360.10:FF:000002">
    <property type="entry name" value="Glyceraldehyde-3-phosphate dehydrogenase"/>
    <property type="match status" value="1"/>
</dbReference>
<dbReference type="FunFam" id="3.40.50.720:FF:000001">
    <property type="entry name" value="Glyceraldehyde-3-phosphate dehydrogenase"/>
    <property type="match status" value="1"/>
</dbReference>
<dbReference type="Gene3D" id="3.30.360.10">
    <property type="entry name" value="Dihydrodipicolinate Reductase, domain 2"/>
    <property type="match status" value="1"/>
</dbReference>
<dbReference type="Gene3D" id="3.40.50.720">
    <property type="entry name" value="NAD(P)-binding Rossmann-like Domain"/>
    <property type="match status" value="1"/>
</dbReference>
<dbReference type="InterPro" id="IPR020831">
    <property type="entry name" value="GlycerAld/Erythrose_P_DH"/>
</dbReference>
<dbReference type="InterPro" id="IPR020830">
    <property type="entry name" value="GlycerAld_3-P_DH_AS"/>
</dbReference>
<dbReference type="InterPro" id="IPR020829">
    <property type="entry name" value="GlycerAld_3-P_DH_cat"/>
</dbReference>
<dbReference type="InterPro" id="IPR020828">
    <property type="entry name" value="GlycerAld_3-P_DH_NAD(P)-bd"/>
</dbReference>
<dbReference type="InterPro" id="IPR006424">
    <property type="entry name" value="Glyceraldehyde-3-P_DH_1"/>
</dbReference>
<dbReference type="InterPro" id="IPR036291">
    <property type="entry name" value="NAD(P)-bd_dom_sf"/>
</dbReference>
<dbReference type="NCBIfam" id="TIGR01534">
    <property type="entry name" value="GAPDH-I"/>
    <property type="match status" value="1"/>
</dbReference>
<dbReference type="PANTHER" id="PTHR43148">
    <property type="entry name" value="GLYCERALDEHYDE-3-PHOSPHATE DEHYDROGENASE 2"/>
    <property type="match status" value="1"/>
</dbReference>
<dbReference type="Pfam" id="PF02800">
    <property type="entry name" value="Gp_dh_C"/>
    <property type="match status" value="1"/>
</dbReference>
<dbReference type="Pfam" id="PF00044">
    <property type="entry name" value="Gp_dh_N"/>
    <property type="match status" value="1"/>
</dbReference>
<dbReference type="PIRSF" id="PIRSF000149">
    <property type="entry name" value="GAP_DH"/>
    <property type="match status" value="1"/>
</dbReference>
<dbReference type="PRINTS" id="PR00078">
    <property type="entry name" value="G3PDHDRGNASE"/>
</dbReference>
<dbReference type="SMART" id="SM00846">
    <property type="entry name" value="Gp_dh_N"/>
    <property type="match status" value="1"/>
</dbReference>
<dbReference type="SUPFAM" id="SSF55347">
    <property type="entry name" value="Glyceraldehyde-3-phosphate dehydrogenase-like, C-terminal domain"/>
    <property type="match status" value="1"/>
</dbReference>
<dbReference type="SUPFAM" id="SSF51735">
    <property type="entry name" value="NAD(P)-binding Rossmann-fold domains"/>
    <property type="match status" value="1"/>
</dbReference>
<dbReference type="PROSITE" id="PS00071">
    <property type="entry name" value="GAPDH"/>
    <property type="match status" value="1"/>
</dbReference>
<protein>
    <recommendedName>
        <fullName evidence="3">Glyceraldehyde-3-phosphate dehydrogenase, chromosomal</fullName>
        <shortName evidence="1">GAPDH</shortName>
        <ecNumber evidence="1">1.2.1.12</ecNumber>
    </recommendedName>
    <alternativeName>
        <fullName evidence="1">NAD-dependent glyceraldehyde-3-phosphate dehydrogenase</fullName>
    </alternativeName>
</protein>
<name>G3PC_CUPNH</name>
<gene>
    <name type="primary">cbbGC</name>
    <name type="synonym">cbbG2</name>
    <name type="ordered locus">H16_B1386</name>
</gene>